<gene>
    <name evidence="1" type="primary">fabZ</name>
    <name type="ordered locus">PMM1336</name>
</gene>
<comment type="function">
    <text evidence="1">Involved in unsaturated fatty acids biosynthesis. Catalyzes the dehydration of short chain beta-hydroxyacyl-ACPs and long chain saturated and unsaturated beta-hydroxyacyl-ACPs.</text>
</comment>
<comment type="catalytic activity">
    <reaction evidence="1">
        <text>a (3R)-hydroxyacyl-[ACP] = a (2E)-enoyl-[ACP] + H2O</text>
        <dbReference type="Rhea" id="RHEA:13097"/>
        <dbReference type="Rhea" id="RHEA-COMP:9925"/>
        <dbReference type="Rhea" id="RHEA-COMP:9945"/>
        <dbReference type="ChEBI" id="CHEBI:15377"/>
        <dbReference type="ChEBI" id="CHEBI:78784"/>
        <dbReference type="ChEBI" id="CHEBI:78827"/>
        <dbReference type="EC" id="4.2.1.59"/>
    </reaction>
</comment>
<comment type="subcellular location">
    <subcellularLocation>
        <location evidence="1">Cytoplasm</location>
    </subcellularLocation>
</comment>
<comment type="similarity">
    <text evidence="1">Belongs to the thioester dehydratase family. FabZ subfamily.</text>
</comment>
<feature type="chain" id="PRO_0000091712" description="3-hydroxyacyl-[acyl-carrier-protein] dehydratase FabZ">
    <location>
        <begin position="1"/>
        <end position="152"/>
    </location>
</feature>
<feature type="active site" evidence="1">
    <location>
        <position position="58"/>
    </location>
</feature>
<proteinExistence type="inferred from homology"/>
<reference key="1">
    <citation type="journal article" date="2003" name="Nature">
        <title>Genome divergence in two Prochlorococcus ecotypes reflects oceanic niche differentiation.</title>
        <authorList>
            <person name="Rocap G."/>
            <person name="Larimer F.W."/>
            <person name="Lamerdin J.E."/>
            <person name="Malfatti S."/>
            <person name="Chain P."/>
            <person name="Ahlgren N.A."/>
            <person name="Arellano A."/>
            <person name="Coleman M."/>
            <person name="Hauser L."/>
            <person name="Hess W.R."/>
            <person name="Johnson Z.I."/>
            <person name="Land M.L."/>
            <person name="Lindell D."/>
            <person name="Post A.F."/>
            <person name="Regala W."/>
            <person name="Shah M."/>
            <person name="Shaw S.L."/>
            <person name="Steglich C."/>
            <person name="Sullivan M.B."/>
            <person name="Ting C.S."/>
            <person name="Tolonen A."/>
            <person name="Webb E.A."/>
            <person name="Zinser E.R."/>
            <person name="Chisholm S.W."/>
        </authorList>
    </citation>
    <scope>NUCLEOTIDE SEQUENCE [LARGE SCALE GENOMIC DNA]</scope>
    <source>
        <strain>CCMP1986 / NIES-2087 / MED4</strain>
    </source>
</reference>
<name>FABZ_PROMP</name>
<evidence type="ECO:0000255" key="1">
    <source>
        <dbReference type="HAMAP-Rule" id="MF_00406"/>
    </source>
</evidence>
<dbReference type="EC" id="4.2.1.59" evidence="1"/>
<dbReference type="EMBL" id="BX548174">
    <property type="protein sequence ID" value="CAE19795.1"/>
    <property type="molecule type" value="Genomic_DNA"/>
</dbReference>
<dbReference type="RefSeq" id="WP_011132970.1">
    <property type="nucleotide sequence ID" value="NC_005072.1"/>
</dbReference>
<dbReference type="SMR" id="Q7V0D0"/>
<dbReference type="STRING" id="59919.PMM1336"/>
<dbReference type="KEGG" id="pmm:PMM1336"/>
<dbReference type="eggNOG" id="COG0764">
    <property type="taxonomic scope" value="Bacteria"/>
</dbReference>
<dbReference type="HOGENOM" id="CLU_078912_1_1_3"/>
<dbReference type="OrthoDB" id="9772788at2"/>
<dbReference type="Proteomes" id="UP000001026">
    <property type="component" value="Chromosome"/>
</dbReference>
<dbReference type="GO" id="GO:0005737">
    <property type="term" value="C:cytoplasm"/>
    <property type="evidence" value="ECO:0007669"/>
    <property type="project" value="UniProtKB-SubCell"/>
</dbReference>
<dbReference type="GO" id="GO:0016020">
    <property type="term" value="C:membrane"/>
    <property type="evidence" value="ECO:0007669"/>
    <property type="project" value="GOC"/>
</dbReference>
<dbReference type="GO" id="GO:0019171">
    <property type="term" value="F:(3R)-hydroxyacyl-[acyl-carrier-protein] dehydratase activity"/>
    <property type="evidence" value="ECO:0007669"/>
    <property type="project" value="UniProtKB-EC"/>
</dbReference>
<dbReference type="GO" id="GO:0006633">
    <property type="term" value="P:fatty acid biosynthetic process"/>
    <property type="evidence" value="ECO:0007669"/>
    <property type="project" value="UniProtKB-UniRule"/>
</dbReference>
<dbReference type="GO" id="GO:0009245">
    <property type="term" value="P:lipid A biosynthetic process"/>
    <property type="evidence" value="ECO:0007669"/>
    <property type="project" value="UniProtKB-UniRule"/>
</dbReference>
<dbReference type="CDD" id="cd01288">
    <property type="entry name" value="FabZ"/>
    <property type="match status" value="1"/>
</dbReference>
<dbReference type="FunFam" id="3.10.129.10:FF:000001">
    <property type="entry name" value="3-hydroxyacyl-[acyl-carrier-protein] dehydratase FabZ"/>
    <property type="match status" value="1"/>
</dbReference>
<dbReference type="Gene3D" id="3.10.129.10">
    <property type="entry name" value="Hotdog Thioesterase"/>
    <property type="match status" value="1"/>
</dbReference>
<dbReference type="HAMAP" id="MF_00406">
    <property type="entry name" value="FabZ"/>
    <property type="match status" value="1"/>
</dbReference>
<dbReference type="InterPro" id="IPR013114">
    <property type="entry name" value="FabA_FabZ"/>
</dbReference>
<dbReference type="InterPro" id="IPR010084">
    <property type="entry name" value="FabZ"/>
</dbReference>
<dbReference type="InterPro" id="IPR029069">
    <property type="entry name" value="HotDog_dom_sf"/>
</dbReference>
<dbReference type="NCBIfam" id="TIGR01750">
    <property type="entry name" value="fabZ"/>
    <property type="match status" value="1"/>
</dbReference>
<dbReference type="NCBIfam" id="NF000582">
    <property type="entry name" value="PRK00006.1"/>
    <property type="match status" value="1"/>
</dbReference>
<dbReference type="PANTHER" id="PTHR30272">
    <property type="entry name" value="3-HYDROXYACYL-[ACYL-CARRIER-PROTEIN] DEHYDRATASE"/>
    <property type="match status" value="1"/>
</dbReference>
<dbReference type="PANTHER" id="PTHR30272:SF1">
    <property type="entry name" value="3-HYDROXYACYL-[ACYL-CARRIER-PROTEIN] DEHYDRATASE"/>
    <property type="match status" value="1"/>
</dbReference>
<dbReference type="Pfam" id="PF07977">
    <property type="entry name" value="FabA"/>
    <property type="match status" value="1"/>
</dbReference>
<dbReference type="SUPFAM" id="SSF54637">
    <property type="entry name" value="Thioesterase/thiol ester dehydrase-isomerase"/>
    <property type="match status" value="1"/>
</dbReference>
<sequence>MEQQLSTENNQLSSEEILGLLPHRFPFALIDRVIEHVPGKKAVALKNVTINEPQFQGHFPERPLMPGVLIVEAMAQVGGIIVTQMPDLPKGLFVFAGINNVKFRRPVVPGDQLVITCELLSIKRQRFGKVKGEAHVDGKLVCSGELMFSLVD</sequence>
<protein>
    <recommendedName>
        <fullName evidence="1">3-hydroxyacyl-[acyl-carrier-protein] dehydratase FabZ</fullName>
        <ecNumber evidence="1">4.2.1.59</ecNumber>
    </recommendedName>
    <alternativeName>
        <fullName evidence="1">(3R)-hydroxymyristoyl-[acyl-carrier-protein] dehydratase</fullName>
        <shortName evidence="1">(3R)-hydroxymyristoyl-ACP dehydrase</shortName>
    </alternativeName>
    <alternativeName>
        <fullName evidence="1">Beta-hydroxyacyl-ACP dehydratase</fullName>
    </alternativeName>
</protein>
<organism>
    <name type="scientific">Prochlorococcus marinus subsp. pastoris (strain CCMP1986 / NIES-2087 / MED4)</name>
    <dbReference type="NCBI Taxonomy" id="59919"/>
    <lineage>
        <taxon>Bacteria</taxon>
        <taxon>Bacillati</taxon>
        <taxon>Cyanobacteriota</taxon>
        <taxon>Cyanophyceae</taxon>
        <taxon>Synechococcales</taxon>
        <taxon>Prochlorococcaceae</taxon>
        <taxon>Prochlorococcus</taxon>
    </lineage>
</organism>
<accession>Q7V0D0</accession>
<keyword id="KW-0963">Cytoplasm</keyword>
<keyword id="KW-0441">Lipid A biosynthesis</keyword>
<keyword id="KW-0444">Lipid biosynthesis</keyword>
<keyword id="KW-0443">Lipid metabolism</keyword>
<keyword id="KW-0456">Lyase</keyword>